<organism>
    <name type="scientific">Drosophila melanogaster</name>
    <name type="common">Fruit fly</name>
    <dbReference type="NCBI Taxonomy" id="7227"/>
    <lineage>
        <taxon>Eukaryota</taxon>
        <taxon>Metazoa</taxon>
        <taxon>Ecdysozoa</taxon>
        <taxon>Arthropoda</taxon>
        <taxon>Hexapoda</taxon>
        <taxon>Insecta</taxon>
        <taxon>Pterygota</taxon>
        <taxon>Neoptera</taxon>
        <taxon>Endopterygota</taxon>
        <taxon>Diptera</taxon>
        <taxon>Brachycera</taxon>
        <taxon>Muscomorpha</taxon>
        <taxon>Ephydroidea</taxon>
        <taxon>Drosophilidae</taxon>
        <taxon>Drosophila</taxon>
        <taxon>Sophophora</taxon>
    </lineage>
</organism>
<sequence>MDKAKRNIKPFDGEKYAIWKFRIRALLAEQDVLKVVDGLMPNEVDDSWKKAERCAKSTIIEYLSDSFLNFATSDITARQILENLDAVYERKSLASQLALRKRLLSLKLSSEMSLLSHFHIFDELISELLAAGAKIEEMDKISHLLITLPSCYDGIITAIETLSEENLTLAFVKNRLLDQEIKIKNDHNDTSKKVMNAIVHNNNNTYKNNLFKNRVTKPKKIFKGNSKYKVKCHHCGREGHIKKDCFHYKRILNNKNKENEKQVQTATSHGIAFMVKEVNNTSVMDNCGFVLDSGASDHLINDESLYTDSVEVVPPLKIAVAKQGEFIYATKRGIVRLRNDHEITLEDVLFCKEAAGNLMSVKRLQEAGMSIEFDKSGVTISKNGLMVVKNSGMLNNVPVINFQAYSINAKHKNNFRLWHERFGHISDGKLLEIKRKNMFSDQSLLNNLELSCEICEPCLNGKQARLPFKQLKDKTHIKRPLFVVHSDVCGPITPVTLDDKNYFVIFVDQFTHYCVTYLIKYKSDVFSMFQDFVAKSEAHFNLKVVYLYIDNGREYLSNEMRQFCVKKGISYHLTVPHTPQLNGVSERMIRTITEKARTMVSGAKLDKSFWGEAVLTATYLINRIPSRALVDSSKTPYEMWHNKKPYLKHLRVFGATVYVHIKNKQGKFDDKSFKSIFVGYEPNGFKLWDAVNEKFIVARDVVVDETNMVNSRAVKFETVFLKDSKESENKNFPNDSRKIIQTEFPNESKECDNIQFLKDSKESENKNFPNDSRKIIQTEFPNESKECDNIQFLKDSKESNKYFLNESKKRKRDDHLNESKGSGNPNESRESETAEHLKEIGIDNPTKNDGIEIINRRSERLKTKPQISYNEEDNSLNKVVLNAHTIFNDVPNSFDEIQYRDDKSSWEEAINTELNAHKINNTWTITKRPENKNIVDSRWVFSVKYNELGNPIRYKARLVARGFTQKYQIDYEETFAPVARISSFRFILSLVIQYNLKVHQMDVKTAFLNGTLKEEIYMRLPQGISCNSDNVCKLNKAIYGLKQAARCWFEVFEQALKECEFVNSSVDRCIYILDKGNINENIYVLLYVDDVVIATGDMTRMNNFKRYLMEKFRMTDLNEIKHFIGIRIEMQEDKIYLSQSAYVKKILSKFNMENCNAVSTPLPSKINYELLNSDEDCNTPCRSLIGCLMYIMLCTRPDLTTAVNILSRYSSKNNSELWQNLKRVLRYLKGTIDMKLIFKKNLAFENKIIGYVDSDWAGSEIDRKSTTGYLFKMFDFNLICWNTKRQNSVAASSTEAEYMALFEAVREALWLKFLLTSINIKLENPIKIYEDNQGCISIANNPSCHKRAKHIDIKYHFAREQVQNNVICLEYIPTENQLADIFTKPLPAARFVELRDKLGLLQDDQSNAE</sequence>
<comment type="alternative products">
    <event type="alternative splicing"/>
    <isoform>
        <id>P04146-1</id>
        <name>Long</name>
        <sequence type="displayed"/>
    </isoform>
    <isoform>
        <id>P04146-2</id>
        <name>Short</name>
        <sequence type="described" ref="VSP_005226"/>
    </isoform>
</comment>
<comment type="sequence caution" evidence="8">
    <conflict type="erroneous initiation">
        <sequence resource="EMBL-CDS" id="CAD27357"/>
    </conflict>
</comment>
<evidence type="ECO:0000250" key="1"/>
<evidence type="ECO:0000255" key="2"/>
<evidence type="ECO:0000255" key="3">
    <source>
        <dbReference type="PROSITE-ProRule" id="PRU00047"/>
    </source>
</evidence>
<evidence type="ECO:0000255" key="4">
    <source>
        <dbReference type="PROSITE-ProRule" id="PRU00457"/>
    </source>
</evidence>
<evidence type="ECO:0000256" key="5">
    <source>
        <dbReference type="SAM" id="MobiDB-lite"/>
    </source>
</evidence>
<evidence type="ECO:0000269" key="6">
    <source>
    </source>
</evidence>
<evidence type="ECO:0000303" key="7">
    <source>
    </source>
</evidence>
<evidence type="ECO:0000305" key="8"/>
<protein>
    <recommendedName>
        <fullName>Copia protein</fullName>
    </recommendedName>
    <alternativeName>
        <fullName>Gag-int-pol protein</fullName>
    </alternativeName>
    <component>
        <recommendedName>
            <fullName>Copia VLP protein</fullName>
        </recommendedName>
    </component>
    <component>
        <recommendedName>
            <fullName>Copia protease</fullName>
            <ecNumber>3.4.23.-</ecNumber>
        </recommendedName>
    </component>
</protein>
<proteinExistence type="evidence at protein level"/>
<keyword id="KW-0002">3D-structure</keyword>
<keyword id="KW-0025">Alternative splicing</keyword>
<keyword id="KW-0064">Aspartyl protease</keyword>
<keyword id="KW-0067">ATP-binding</keyword>
<keyword id="KW-0903">Direct protein sequencing</keyword>
<keyword id="KW-0378">Hydrolase</keyword>
<keyword id="KW-0479">Metal-binding</keyword>
<keyword id="KW-0547">Nucleotide-binding</keyword>
<keyword id="KW-0645">Protease</keyword>
<keyword id="KW-0814">Transposable element</keyword>
<keyword id="KW-0862">Zinc</keyword>
<keyword id="KW-0863">Zinc-finger</keyword>
<name>COPIA_DROME</name>
<gene>
    <name type="primary">GIP</name>
    <name type="synonym">COPIA</name>
</gene>
<reference key="1">
    <citation type="journal article" date="1985" name="Mol. Cell. Biol.">
        <title>Complete nucleotide sequence of the Drosophila transposable element copia: homology between copia and retroviral proteins.</title>
        <authorList>
            <person name="Mount S.M."/>
            <person name="Rubin G.M."/>
        </authorList>
    </citation>
    <scope>NUCLEOTIDE SEQUENCE [GENOMIC DNA]</scope>
</reference>
<reference key="2">
    <citation type="journal article" date="1985" name="Nature">
        <title>The nucleotide sequences of copia and copia-related RNA in Drosophila virus-like particles.</title>
        <authorList>
            <person name="Emori Y."/>
            <person name="Shiba T."/>
            <person name="Kanaya S."/>
            <person name="Inouye S."/>
            <person name="Yuki S."/>
            <person name="Saigo K."/>
        </authorList>
    </citation>
    <scope>NUCLEOTIDE SEQUENCE [GENOMIC DNA / MRNA]</scope>
    <scope>PROTEIN SEQUENCE OF 2-10</scope>
    <scope>ALTERNATIVE SPLICING</scope>
</reference>
<reference key="3">
    <citation type="journal article" date="1989" name="Nucleic Acids Res.">
        <title>The nucleotide sequence of Drosophila melanogaster copia-specific 2.1-kb mRNA.</title>
        <authorList>
            <person name="Miller K."/>
            <person name="Rosenbaum J."/>
            <person name="Zbrzezna V."/>
            <person name="Pogo A.O."/>
        </authorList>
    </citation>
    <scope>NUCLEOTIDE SEQUENCE [MRNA] (ISOFORM SHORT)</scope>
</reference>
<reference key="4">
    <citation type="journal article" date="1990" name="EMBO J.">
        <title>Virus-like particle formation of Drosophila copia through autocatalytic processing.</title>
        <authorList>
            <person name="Yoshioka K."/>
            <person name="Honma H."/>
            <person name="Zushi M."/>
            <person name="Kondo S."/>
            <person name="Togashi S."/>
            <person name="Miyake T."/>
            <person name="Shiba T."/>
        </authorList>
    </citation>
    <scope>NUCLEOTIDE SEQUENCE [GENOMIC DNA] (ISOFORM SHORT)</scope>
    <scope>MUTAGENESIS OF ASP-292</scope>
    <source>
        <tissue>Larva</tissue>
    </source>
</reference>
<reference key="5">
    <citation type="submission" date="2004-01" db="EMBL/GenBank/DDBJ databases">
        <authorList>
            <person name="Stapleton M."/>
            <person name="Carlson J.W."/>
            <person name="Chavez C."/>
            <person name="Frise E."/>
            <person name="George R.A."/>
            <person name="Pacleb J.M."/>
            <person name="Park S."/>
            <person name="Wan K.H."/>
            <person name="Yu C."/>
            <person name="Rubin G.M."/>
            <person name="Celniker S.E."/>
        </authorList>
    </citation>
    <scope>NUCLEOTIDE SEQUENCE [LARGE SCALE MRNA] (ISOFORM LONG)</scope>
    <source>
        <strain>Berkeley</strain>
        <tissue>Testis</tissue>
    </source>
</reference>
<dbReference type="EC" id="3.4.23.-"/>
<dbReference type="EMBL" id="X04456">
    <property type="protein sequence ID" value="CAA28054.2"/>
    <property type="molecule type" value="Genomic_DNA"/>
</dbReference>
<dbReference type="EMBL" id="X04456">
    <property type="protein sequence ID" value="CAD27357.1"/>
    <property type="status" value="ALT_INIT"/>
    <property type="molecule type" value="Genomic_DNA"/>
</dbReference>
<dbReference type="EMBL" id="X02599">
    <property type="protein sequence ID" value="CAA26444.1"/>
    <property type="molecule type" value="Genomic_DNA"/>
</dbReference>
<dbReference type="EMBL" id="X02599">
    <property type="protein sequence ID" value="CAA26445.1"/>
    <property type="molecule type" value="Genomic_DNA"/>
</dbReference>
<dbReference type="EMBL" id="X02600">
    <property type="protein sequence ID" value="CAA26446.1"/>
    <property type="molecule type" value="mRNA"/>
</dbReference>
<dbReference type="EMBL" id="X02600">
    <property type="protein sequence ID" value="CAA26447.1"/>
    <property type="molecule type" value="mRNA"/>
</dbReference>
<dbReference type="EMBL" id="X13719">
    <property type="protein sequence ID" value="CAA31997.1"/>
    <property type="molecule type" value="mRNA"/>
</dbReference>
<dbReference type="EMBL" id="X54147">
    <property type="protein sequence ID" value="CAA38086.1"/>
    <property type="molecule type" value="Genomic_DNA"/>
</dbReference>
<dbReference type="EMBL" id="BT011428">
    <property type="protein sequence ID" value="AAR99086.1"/>
    <property type="molecule type" value="mRNA"/>
</dbReference>
<dbReference type="PIR" id="A03324">
    <property type="entry name" value="OFFFCP"/>
</dbReference>
<dbReference type="PDB" id="8S41">
    <property type="method" value="EM"/>
    <property type="resolution" value="7.70 A"/>
    <property type="chains" value="A/F/G/L/Q/V/X/a/d=1-187"/>
</dbReference>
<dbReference type="PDB" id="8VVW">
    <property type="method" value="EM"/>
    <property type="resolution" value="3.29 A"/>
    <property type="chains" value="A/B/C/D/E=1-270"/>
</dbReference>
<dbReference type="PDB" id="8VVZ">
    <property type="method" value="EM"/>
    <property type="resolution" value="3.41 A"/>
    <property type="chains" value="A/B/C/D/E/F=1-270"/>
</dbReference>
<dbReference type="PDB" id="8VW3">
    <property type="method" value="EM"/>
    <property type="resolution" value="3.47 A"/>
    <property type="chains" value="A/B/C/D/E/F=1-270"/>
</dbReference>
<dbReference type="PDB" id="8VWG">
    <property type="method" value="EM"/>
    <property type="resolution" value="4.17 A"/>
    <property type="chains" value="A/B/C/D/E/F/G/H/I=1-270"/>
</dbReference>
<dbReference type="PDBsum" id="8S41"/>
<dbReference type="PDBsum" id="8VVW"/>
<dbReference type="PDBsum" id="8VVZ"/>
<dbReference type="PDBsum" id="8VW3"/>
<dbReference type="PDBsum" id="8VWG"/>
<dbReference type="EMDB" id="EMD-19708"/>
<dbReference type="EMDB" id="EMD-43571"/>
<dbReference type="EMDB" id="EMD-43573"/>
<dbReference type="EMDB" id="EMD-43575"/>
<dbReference type="EMDB" id="EMD-43584"/>
<dbReference type="MEROPS" id="A11.001"/>
<dbReference type="PeptideAtlas" id="P04146"/>
<dbReference type="FlyBase" id="FBgn0013437">
    <property type="gene designation" value="copia\GIP"/>
</dbReference>
<dbReference type="OrthoDB" id="8027607at2759"/>
<dbReference type="ChiTaRS" id="Gip">
    <property type="organism name" value="fly"/>
</dbReference>
<dbReference type="PRO" id="PR:P04146"/>
<dbReference type="GO" id="GO:0042575">
    <property type="term" value="C:DNA polymerase complex"/>
    <property type="evidence" value="ECO:0007669"/>
    <property type="project" value="UniProtKB-ARBA"/>
</dbReference>
<dbReference type="GO" id="GO:0004190">
    <property type="term" value="F:aspartic-type endopeptidase activity"/>
    <property type="evidence" value="ECO:0007669"/>
    <property type="project" value="UniProtKB-KW"/>
</dbReference>
<dbReference type="GO" id="GO:0005524">
    <property type="term" value="F:ATP binding"/>
    <property type="evidence" value="ECO:0007669"/>
    <property type="project" value="UniProtKB-KW"/>
</dbReference>
<dbReference type="GO" id="GO:0003676">
    <property type="term" value="F:nucleic acid binding"/>
    <property type="evidence" value="ECO:0007669"/>
    <property type="project" value="InterPro"/>
</dbReference>
<dbReference type="GO" id="GO:0008270">
    <property type="term" value="F:zinc ion binding"/>
    <property type="evidence" value="ECO:0007669"/>
    <property type="project" value="UniProtKB-KW"/>
</dbReference>
<dbReference type="GO" id="GO:0071897">
    <property type="term" value="P:DNA biosynthetic process"/>
    <property type="evidence" value="ECO:0007669"/>
    <property type="project" value="UniProtKB-ARBA"/>
</dbReference>
<dbReference type="GO" id="GO:0015074">
    <property type="term" value="P:DNA integration"/>
    <property type="evidence" value="ECO:0007669"/>
    <property type="project" value="InterPro"/>
</dbReference>
<dbReference type="GO" id="GO:0006508">
    <property type="term" value="P:proteolysis"/>
    <property type="evidence" value="ECO:0007669"/>
    <property type="project" value="UniProtKB-KW"/>
</dbReference>
<dbReference type="CDD" id="cd09272">
    <property type="entry name" value="RNase_HI_RT_Ty1"/>
    <property type="match status" value="1"/>
</dbReference>
<dbReference type="Gene3D" id="3.30.420.10">
    <property type="entry name" value="Ribonuclease H-like superfamily/Ribonuclease H"/>
    <property type="match status" value="1"/>
</dbReference>
<dbReference type="InterPro" id="IPR043502">
    <property type="entry name" value="DNA/RNA_pol_sf"/>
</dbReference>
<dbReference type="InterPro" id="IPR025724">
    <property type="entry name" value="GAG-pre-integrase_dom"/>
</dbReference>
<dbReference type="InterPro" id="IPR001584">
    <property type="entry name" value="Integrase_cat-core"/>
</dbReference>
<dbReference type="InterPro" id="IPR054722">
    <property type="entry name" value="PolX-like_BBD"/>
</dbReference>
<dbReference type="InterPro" id="IPR039537">
    <property type="entry name" value="Retrotran_Ty1/copia-like"/>
</dbReference>
<dbReference type="InterPro" id="IPR012337">
    <property type="entry name" value="RNaseH-like_sf"/>
</dbReference>
<dbReference type="InterPro" id="IPR036397">
    <property type="entry name" value="RNaseH_sf"/>
</dbReference>
<dbReference type="InterPro" id="IPR013103">
    <property type="entry name" value="RVT_2"/>
</dbReference>
<dbReference type="InterPro" id="IPR001878">
    <property type="entry name" value="Znf_CCHC"/>
</dbReference>
<dbReference type="InterPro" id="IPR036875">
    <property type="entry name" value="Znf_CCHC_sf"/>
</dbReference>
<dbReference type="PANTHER" id="PTHR42648">
    <property type="entry name" value="TRANSPOSASE, PUTATIVE-RELATED"/>
    <property type="match status" value="1"/>
</dbReference>
<dbReference type="PANTHER" id="PTHR42648:SF28">
    <property type="entry name" value="TRANSPOSON-ENCODED PROTEIN WITH RIBONUCLEASE H-LIKE AND RETROVIRUS ZINC FINGER-LIKE DOMAINS"/>
    <property type="match status" value="1"/>
</dbReference>
<dbReference type="Pfam" id="PF13976">
    <property type="entry name" value="gag_pre-integrs"/>
    <property type="match status" value="1"/>
</dbReference>
<dbReference type="Pfam" id="PF22936">
    <property type="entry name" value="Pol_BBD"/>
    <property type="match status" value="1"/>
</dbReference>
<dbReference type="Pfam" id="PF14223">
    <property type="entry name" value="Retrotran_gag_2"/>
    <property type="match status" value="1"/>
</dbReference>
<dbReference type="Pfam" id="PF00665">
    <property type="entry name" value="rve"/>
    <property type="match status" value="1"/>
</dbReference>
<dbReference type="Pfam" id="PF07727">
    <property type="entry name" value="RVT_2"/>
    <property type="match status" value="1"/>
</dbReference>
<dbReference type="Pfam" id="PF00098">
    <property type="entry name" value="zf-CCHC"/>
    <property type="match status" value="1"/>
</dbReference>
<dbReference type="SUPFAM" id="SSF56672">
    <property type="entry name" value="DNA/RNA polymerases"/>
    <property type="match status" value="1"/>
</dbReference>
<dbReference type="SUPFAM" id="SSF57756">
    <property type="entry name" value="Retrovirus zinc finger-like domains"/>
    <property type="match status" value="1"/>
</dbReference>
<dbReference type="SUPFAM" id="SSF53098">
    <property type="entry name" value="Ribonuclease H-like"/>
    <property type="match status" value="1"/>
</dbReference>
<dbReference type="PROSITE" id="PS50994">
    <property type="entry name" value="INTEGRASE"/>
    <property type="match status" value="1"/>
</dbReference>
<dbReference type="PROSITE" id="PS50158">
    <property type="entry name" value="ZF_CCHC"/>
    <property type="match status" value="1"/>
</dbReference>
<feature type="chain" id="PRO_0000026135" description="Copia VLP protein" evidence="2">
    <location>
        <begin position="1"/>
        <end position="270"/>
    </location>
</feature>
<feature type="chain" id="PRO_0000026136" description="Copia protease" evidence="2">
    <location>
        <begin position="271"/>
        <end position="1409"/>
    </location>
</feature>
<feature type="domain" description="Integrase catalytic" evidence="4">
    <location>
        <begin position="476"/>
        <end position="644"/>
    </location>
</feature>
<feature type="zinc finger region" description="CCHC-type" evidence="3">
    <location>
        <begin position="230"/>
        <end position="247"/>
    </location>
</feature>
<feature type="region of interest" description="Disordered" evidence="5">
    <location>
        <begin position="760"/>
        <end position="780"/>
    </location>
</feature>
<feature type="region of interest" description="Disordered" evidence="5">
    <location>
        <begin position="805"/>
        <end position="851"/>
    </location>
</feature>
<feature type="compositionally biased region" description="Basic and acidic residues" evidence="5">
    <location>
        <begin position="827"/>
        <end position="841"/>
    </location>
</feature>
<feature type="active site" description="For protease activity" evidence="1">
    <location>
        <position position="292"/>
    </location>
</feature>
<feature type="splice variant" id="VSP_005226" description="In isoform Short." evidence="7">
    <location>
        <begin position="392"/>
        <end position="1374"/>
    </location>
</feature>
<feature type="sequence variant" description="In variant copia-related.">
    <original>STTGYLFKMFDFNLICWNTKRQNS</original>
    <variation>VQQGIYSKCLILISFVGIQRDRTQ</variation>
    <location>
        <begin position="1265"/>
        <end position="1288"/>
    </location>
</feature>
<feature type="sequence variant" description="In variant copia-related.">
    <location>
        <begin position="1289"/>
        <end position="1409"/>
    </location>
</feature>
<feature type="mutagenesis site" description="Loss of activity." evidence="6">
    <original>D</original>
    <variation>A</variation>
    <location>
        <position position="292"/>
    </location>
</feature>
<feature type="sequence conflict" description="In Ref. 2; CAA26447." evidence="8" ref="2">
    <original>S</original>
    <variation>N</variation>
    <location>
        <position position="191"/>
    </location>
</feature>
<feature type="sequence conflict" description="In Ref. 2; CAA26447." evidence="8" ref="2">
    <original>I</original>
    <variation>V</variation>
    <location>
        <position position="300"/>
    </location>
</feature>
<feature type="sequence conflict" description="In Ref. 2; CAA26447." evidence="8" ref="2">
    <original>Q</original>
    <variation>E</variation>
    <location>
        <position position="866"/>
    </location>
</feature>
<accession>P04146</accession>
<accession>Q03728</accession>
<accession>Q24280</accession>
<accession>Q24555</accession>
<accession>Q24585</accession>
<accession>Q24586</accession>
<accession>Q24587</accession>
<accession>Q53XF8</accession>
<accession>Q8T391</accession>